<dbReference type="EMBL" id="L29346">
    <property type="protein sequence ID" value="AAA59206.1"/>
    <property type="molecule type" value="mRNA"/>
</dbReference>
<dbReference type="PIR" id="C54972">
    <property type="entry name" value="C54972"/>
</dbReference>
<dbReference type="SMR" id="Q61290"/>
<dbReference type="FunCoup" id="Q61290">
    <property type="interactions" value="215"/>
</dbReference>
<dbReference type="IntAct" id="Q61290">
    <property type="interactions" value="7"/>
</dbReference>
<dbReference type="MINT" id="Q61290"/>
<dbReference type="STRING" id="10090.ENSMUSP00000140937"/>
<dbReference type="TCDB" id="1.A.1.11.3">
    <property type="family name" value="the voltage-gated ion channel (vic) superfamily"/>
</dbReference>
<dbReference type="GlyCosmos" id="Q61290">
    <property type="glycosylation" value="3 sites, No reported glycans"/>
</dbReference>
<dbReference type="GlyGen" id="Q61290">
    <property type="glycosylation" value="5 sites, 2 N-linked glycans (2 sites), 1 O-linked glycan (1 site)"/>
</dbReference>
<dbReference type="iPTMnet" id="Q61290"/>
<dbReference type="PhosphoSitePlus" id="Q61290"/>
<dbReference type="SwissPalm" id="Q61290"/>
<dbReference type="jPOST" id="Q61290"/>
<dbReference type="PaxDb" id="10090-ENSMUSP00000140937"/>
<dbReference type="ProteomicsDB" id="273884"/>
<dbReference type="AGR" id="MGI:106217"/>
<dbReference type="MGI" id="MGI:106217">
    <property type="gene designation" value="Cacna1e"/>
</dbReference>
<dbReference type="eggNOG" id="KOG2301">
    <property type="taxonomic scope" value="Eukaryota"/>
</dbReference>
<dbReference type="InParanoid" id="Q61290"/>
<dbReference type="PhylomeDB" id="Q61290"/>
<dbReference type="Reactome" id="R-MMU-112308">
    <property type="pathway name" value="Presynaptic depolarization and calcium channel opening"/>
</dbReference>
<dbReference type="Reactome" id="R-MMU-422356">
    <property type="pathway name" value="Regulation of insulin secretion"/>
</dbReference>
<dbReference type="CD-CODE" id="CE726F99">
    <property type="entry name" value="Postsynaptic density"/>
</dbReference>
<dbReference type="PRO" id="PR:Q61290"/>
<dbReference type="Proteomes" id="UP000000589">
    <property type="component" value="Unplaced"/>
</dbReference>
<dbReference type="RNAct" id="Q61290">
    <property type="molecule type" value="protein"/>
</dbReference>
<dbReference type="GO" id="GO:0045211">
    <property type="term" value="C:postsynaptic membrane"/>
    <property type="evidence" value="ECO:0000314"/>
    <property type="project" value="SynGO"/>
</dbReference>
<dbReference type="GO" id="GO:0042734">
    <property type="term" value="C:presynaptic membrane"/>
    <property type="evidence" value="ECO:0000314"/>
    <property type="project" value="SynGO"/>
</dbReference>
<dbReference type="GO" id="GO:0005891">
    <property type="term" value="C:voltage-gated calcium channel complex"/>
    <property type="evidence" value="ECO:0000315"/>
    <property type="project" value="MGI"/>
</dbReference>
<dbReference type="GO" id="GO:0005509">
    <property type="term" value="F:calcium ion binding"/>
    <property type="evidence" value="ECO:0007669"/>
    <property type="project" value="InterPro"/>
</dbReference>
<dbReference type="GO" id="GO:0005245">
    <property type="term" value="F:voltage-gated calcium channel activity"/>
    <property type="evidence" value="ECO:0000315"/>
    <property type="project" value="MGI"/>
</dbReference>
<dbReference type="GO" id="GO:0001662">
    <property type="term" value="P:behavioral fear response"/>
    <property type="evidence" value="ECO:0000315"/>
    <property type="project" value="MGI"/>
</dbReference>
<dbReference type="GO" id="GO:0048266">
    <property type="term" value="P:behavioral response to pain"/>
    <property type="evidence" value="ECO:0000315"/>
    <property type="project" value="MGI"/>
</dbReference>
<dbReference type="GO" id="GO:0070588">
    <property type="term" value="P:calcium ion transmembrane transport"/>
    <property type="evidence" value="ECO:0000315"/>
    <property type="project" value="MGI"/>
</dbReference>
<dbReference type="GO" id="GO:0006816">
    <property type="term" value="P:calcium ion transport"/>
    <property type="evidence" value="ECO:0000315"/>
    <property type="project" value="MGI"/>
</dbReference>
<dbReference type="GO" id="GO:0051649">
    <property type="term" value="P:establishment of localization in cell"/>
    <property type="evidence" value="ECO:0000315"/>
    <property type="project" value="MGI"/>
</dbReference>
<dbReference type="GO" id="GO:0042596">
    <property type="term" value="P:fear response"/>
    <property type="evidence" value="ECO:0000315"/>
    <property type="project" value="MGI"/>
</dbReference>
<dbReference type="GO" id="GO:0030317">
    <property type="term" value="P:flagellated sperm motility"/>
    <property type="evidence" value="ECO:0000315"/>
    <property type="project" value="MGI"/>
</dbReference>
<dbReference type="GO" id="GO:0042593">
    <property type="term" value="P:glucose homeostasis"/>
    <property type="evidence" value="ECO:0000315"/>
    <property type="project" value="MGI"/>
</dbReference>
<dbReference type="GO" id="GO:0007626">
    <property type="term" value="P:locomotory behavior"/>
    <property type="evidence" value="ECO:0000315"/>
    <property type="project" value="MGI"/>
</dbReference>
<dbReference type="GO" id="GO:0050877">
    <property type="term" value="P:nervous system process"/>
    <property type="evidence" value="ECO:0000315"/>
    <property type="project" value="MGI"/>
</dbReference>
<dbReference type="GO" id="GO:0002027">
    <property type="term" value="P:regulation of heart rate"/>
    <property type="evidence" value="ECO:0000315"/>
    <property type="project" value="MGI"/>
</dbReference>
<dbReference type="GO" id="GO:0061178">
    <property type="term" value="P:regulation of insulin secretion involved in cellular response to glucose stimulus"/>
    <property type="evidence" value="ECO:0000315"/>
    <property type="project" value="MGI"/>
</dbReference>
<dbReference type="GO" id="GO:0090273">
    <property type="term" value="P:regulation of somatostatin secretion"/>
    <property type="evidence" value="ECO:0000315"/>
    <property type="project" value="MGI"/>
</dbReference>
<dbReference type="GO" id="GO:0048265">
    <property type="term" value="P:response to pain"/>
    <property type="evidence" value="ECO:0000315"/>
    <property type="project" value="MGI"/>
</dbReference>
<dbReference type="GO" id="GO:0019233">
    <property type="term" value="P:sensory perception of pain"/>
    <property type="evidence" value="ECO:0000315"/>
    <property type="project" value="MGI"/>
</dbReference>
<dbReference type="GO" id="GO:0019226">
    <property type="term" value="P:transmission of nerve impulse"/>
    <property type="evidence" value="ECO:0000315"/>
    <property type="project" value="MGI"/>
</dbReference>
<dbReference type="GO" id="GO:0008542">
    <property type="term" value="P:visual learning"/>
    <property type="evidence" value="ECO:0000315"/>
    <property type="project" value="MGI"/>
</dbReference>
<dbReference type="FunFam" id="1.20.120.350:FF:000001">
    <property type="entry name" value="Voltage-dependent L-type calcium channel subunit alpha"/>
    <property type="match status" value="1"/>
</dbReference>
<dbReference type="FunFam" id="1.10.238.10:FF:000063">
    <property type="entry name" value="Voltage-dependent N-type calcium channel subunit alpha"/>
    <property type="match status" value="1"/>
</dbReference>
<dbReference type="FunFam" id="1.20.120.350:FF:000011">
    <property type="entry name" value="Voltage-dependent N-type calcium channel subunit alpha"/>
    <property type="match status" value="1"/>
</dbReference>
<dbReference type="FunFam" id="1.20.120.350:FF:000013">
    <property type="entry name" value="Voltage-dependent N-type calcium channel subunit alpha"/>
    <property type="match status" value="1"/>
</dbReference>
<dbReference type="FunFam" id="1.20.120.350:FF:000015">
    <property type="entry name" value="Voltage-dependent N-type calcium channel subunit alpha"/>
    <property type="match status" value="1"/>
</dbReference>
<dbReference type="FunFam" id="1.10.287.70:FF:000023">
    <property type="entry name" value="Voltage-dependent R-type calcium channel subunit alpha"/>
    <property type="match status" value="1"/>
</dbReference>
<dbReference type="FunFam" id="1.10.287.70:FF:000025">
    <property type="entry name" value="Voltage-dependent R-type calcium channel subunit alpha"/>
    <property type="match status" value="1"/>
</dbReference>
<dbReference type="Gene3D" id="1.10.287.70">
    <property type="match status" value="4"/>
</dbReference>
<dbReference type="Gene3D" id="6.10.250.2180">
    <property type="match status" value="1"/>
</dbReference>
<dbReference type="Gene3D" id="6.10.250.2500">
    <property type="match status" value="1"/>
</dbReference>
<dbReference type="Gene3D" id="1.20.120.350">
    <property type="entry name" value="Voltage-gated potassium channels. Chain C"/>
    <property type="match status" value="4"/>
</dbReference>
<dbReference type="InterPro" id="IPR002048">
    <property type="entry name" value="EF_hand_dom"/>
</dbReference>
<dbReference type="InterPro" id="IPR031649">
    <property type="entry name" value="GPHH_dom"/>
</dbReference>
<dbReference type="InterPro" id="IPR005821">
    <property type="entry name" value="Ion_trans_dom"/>
</dbReference>
<dbReference type="InterPro" id="IPR014873">
    <property type="entry name" value="VDCC_a1su_IQ"/>
</dbReference>
<dbReference type="InterPro" id="IPR050599">
    <property type="entry name" value="VDCC_alpha-1_subunit"/>
</dbReference>
<dbReference type="InterPro" id="IPR005449">
    <property type="entry name" value="VDCC_R_a1su"/>
</dbReference>
<dbReference type="InterPro" id="IPR002077">
    <property type="entry name" value="VDCCAlpha1"/>
</dbReference>
<dbReference type="InterPro" id="IPR027359">
    <property type="entry name" value="Volt_channel_dom_sf"/>
</dbReference>
<dbReference type="PANTHER" id="PTHR45628">
    <property type="entry name" value="VOLTAGE-DEPENDENT CALCIUM CHANNEL TYPE A SUBUNIT ALPHA-1"/>
    <property type="match status" value="1"/>
</dbReference>
<dbReference type="PANTHER" id="PTHR45628:SF5">
    <property type="entry name" value="VOLTAGE-DEPENDENT R-TYPE CALCIUM CHANNEL SUBUNIT ALPHA-1E"/>
    <property type="match status" value="1"/>
</dbReference>
<dbReference type="Pfam" id="PF08763">
    <property type="entry name" value="Ca_chan_IQ"/>
    <property type="match status" value="1"/>
</dbReference>
<dbReference type="Pfam" id="PF16905">
    <property type="entry name" value="GPHH"/>
    <property type="match status" value="1"/>
</dbReference>
<dbReference type="Pfam" id="PF00520">
    <property type="entry name" value="Ion_trans"/>
    <property type="match status" value="4"/>
</dbReference>
<dbReference type="PRINTS" id="PR00167">
    <property type="entry name" value="CACHANNEL"/>
</dbReference>
<dbReference type="PRINTS" id="PR01633">
    <property type="entry name" value="RVDCCALPHA1"/>
</dbReference>
<dbReference type="SMART" id="SM01062">
    <property type="entry name" value="Ca_chan_IQ"/>
    <property type="match status" value="1"/>
</dbReference>
<dbReference type="SUPFAM" id="SSF81324">
    <property type="entry name" value="Voltage-gated potassium channels"/>
    <property type="match status" value="4"/>
</dbReference>
<dbReference type="PROSITE" id="PS50222">
    <property type="entry name" value="EF_HAND_2"/>
    <property type="match status" value="1"/>
</dbReference>
<comment type="function">
    <text evidence="7">Voltage-sensitive calcium channels (VSCC) mediate the entry of calcium ions into excitable cells and are also involved in a variety of calcium-dependent processes, including muscle contraction, hormone or neurotransmitter release, gene expression, cell motility, cell division and cell death. The isoform alpha-1E gives rise to R-type calcium currents. R-type calcium channels belong to the 'high-voltage activated' (HVA) group and are blocked by nickel. They are however insensitive to dihydropyridines (DHP). Calcium channels containing alpha-1E subunit could be involved in the modulation of firing patterns of neurons which is important for information processing.</text>
</comment>
<comment type="catalytic activity">
    <reaction evidence="7">
        <text>Ca(2+)(in) = Ca(2+)(out)</text>
        <dbReference type="Rhea" id="RHEA:29671"/>
        <dbReference type="ChEBI" id="CHEBI:29108"/>
    </reaction>
</comment>
<comment type="subunit">
    <text evidence="3">Interacts with EFHC1. Voltage-dependent calcium channels are multisubunit complexes, consisting of alpha-1, alpha-2, beta and delta subunits in a 1:1:1:1 ratio. The channel activity is directed by the pore-forming and voltage-sensitive alpha-1 subunit. In many cases, this subunit is sufficient to generate voltage-sensitive calcium channel activity. The auxiliary subunits beta and alpha-2/delta linked by a disulfide bridge regulate the channel activity.</text>
</comment>
<comment type="subcellular location">
    <subcellularLocation>
        <location evidence="4">Membrane</location>
        <topology evidence="4">Multi-pass membrane protein</topology>
    </subcellularLocation>
</comment>
<comment type="tissue specificity">
    <text>Expressed in neuronal tissues, retina, spleen, and pancreatic islet cells.</text>
</comment>
<comment type="domain">
    <text>Each of the four internal repeats contains five hydrophobic transmembrane segments (S1, S2, S3, S5, S6) and one positively charged transmembrane segment (S4). S4 segments probably represent the voltage-sensor and are characterized by a series of positively charged amino acids at every third position.</text>
</comment>
<comment type="similarity">
    <text evidence="8">Belongs to the calcium channel alpha-1 subunit (TC 1.A.1.11) family. CACNA1E subfamily.</text>
</comment>
<proteinExistence type="evidence at protein level"/>
<organism>
    <name type="scientific">Mus musculus</name>
    <name type="common">Mouse</name>
    <dbReference type="NCBI Taxonomy" id="10090"/>
    <lineage>
        <taxon>Eukaryota</taxon>
        <taxon>Metazoa</taxon>
        <taxon>Chordata</taxon>
        <taxon>Craniata</taxon>
        <taxon>Vertebrata</taxon>
        <taxon>Euteleostomi</taxon>
        <taxon>Mammalia</taxon>
        <taxon>Eutheria</taxon>
        <taxon>Euarchontoglires</taxon>
        <taxon>Glires</taxon>
        <taxon>Rodentia</taxon>
        <taxon>Myomorpha</taxon>
        <taxon>Muroidea</taxon>
        <taxon>Muridae</taxon>
        <taxon>Murinae</taxon>
        <taxon>Mus</taxon>
        <taxon>Mus</taxon>
    </lineage>
</organism>
<keyword id="KW-0106">Calcium</keyword>
<keyword id="KW-0107">Calcium channel</keyword>
<keyword id="KW-0109">Calcium transport</keyword>
<keyword id="KW-1015">Disulfide bond</keyword>
<keyword id="KW-0325">Glycoprotein</keyword>
<keyword id="KW-0407">Ion channel</keyword>
<keyword id="KW-0406">Ion transport</keyword>
<keyword id="KW-0472">Membrane</keyword>
<keyword id="KW-0479">Metal-binding</keyword>
<keyword id="KW-0597">Phosphoprotein</keyword>
<keyword id="KW-1185">Reference proteome</keyword>
<keyword id="KW-0677">Repeat</keyword>
<keyword id="KW-0812">Transmembrane</keyword>
<keyword id="KW-1133">Transmembrane helix</keyword>
<keyword id="KW-0813">Transport</keyword>
<keyword id="KW-0851">Voltage-gated channel</keyword>
<protein>
    <recommendedName>
        <fullName>Voltage-dependent R-type calcium channel subunit alpha-1E</fullName>
    </recommendedName>
    <alternativeName>
        <fullName>Brain calcium channel II</fullName>
        <shortName>BII</shortName>
    </alternativeName>
    <alternativeName>
        <fullName>Calcium channel, L type, alpha-1 polypeptide, isoform 6</fullName>
    </alternativeName>
    <alternativeName>
        <fullName>Voltage-gated calcium channel subunit alpha Cav2.3</fullName>
    </alternativeName>
</protein>
<feature type="chain" id="PRO_0000053939" description="Voltage-dependent R-type calcium channel subunit alpha-1E">
    <location>
        <begin position="1"/>
        <end position="2272"/>
    </location>
</feature>
<feature type="topological domain" description="Cytoplasmic" evidence="4">
    <location>
        <begin position="1"/>
        <end position="90"/>
    </location>
</feature>
<feature type="transmembrane region" description="Helical; Name=S1 of repeat I" evidence="4">
    <location>
        <begin position="91"/>
        <end position="109"/>
    </location>
</feature>
<feature type="topological domain" description="Extracellular" evidence="4">
    <location>
        <begin position="110"/>
        <end position="128"/>
    </location>
</feature>
<feature type="transmembrane region" description="Helical; Name=S2 of repeat I" evidence="4">
    <location>
        <begin position="129"/>
        <end position="147"/>
    </location>
</feature>
<feature type="topological domain" description="Cytoplasmic" evidence="4">
    <location>
        <begin position="148"/>
        <end position="159"/>
    </location>
</feature>
<feature type="transmembrane region" description="Helical; Name=S3 of repeat I" evidence="4">
    <location>
        <begin position="160"/>
        <end position="174"/>
    </location>
</feature>
<feature type="topological domain" description="Extracellular" evidence="4">
    <location>
        <begin position="175"/>
        <end position="186"/>
    </location>
</feature>
<feature type="transmembrane region" description="Helical; Name=S4 of repeat I" evidence="4">
    <location>
        <begin position="187"/>
        <end position="206"/>
    </location>
</feature>
<feature type="topological domain" description="Cytoplasmic" evidence="4">
    <location>
        <begin position="207"/>
        <end position="224"/>
    </location>
</feature>
<feature type="transmembrane region" description="Helical; Name=S5 of repeat I" evidence="4">
    <location>
        <begin position="225"/>
        <end position="245"/>
    </location>
</feature>
<feature type="topological domain" description="Extracellular" evidence="4">
    <location>
        <begin position="246"/>
        <end position="327"/>
    </location>
</feature>
<feature type="transmembrane region" description="Helical; Name=S6 of repeat I" evidence="4">
    <location>
        <begin position="328"/>
        <end position="351"/>
    </location>
</feature>
<feature type="topological domain" description="Cytoplasmic" evidence="4">
    <location>
        <begin position="352"/>
        <end position="477"/>
    </location>
</feature>
<feature type="transmembrane region" description="Helical; Name=S1 of repeat II" evidence="4">
    <location>
        <begin position="478"/>
        <end position="497"/>
    </location>
</feature>
<feature type="topological domain" description="Extracellular" evidence="4">
    <location>
        <begin position="498"/>
        <end position="510"/>
    </location>
</feature>
<feature type="transmembrane region" description="Helical; Name=S2 of repeat II" evidence="4">
    <location>
        <begin position="511"/>
        <end position="530"/>
    </location>
</feature>
<feature type="topological domain" description="Cytoplasmic" evidence="4">
    <location>
        <begin position="531"/>
        <end position="539"/>
    </location>
</feature>
<feature type="transmembrane region" description="Helical; Name=S3 of repeat II" evidence="4">
    <location>
        <begin position="540"/>
        <end position="558"/>
    </location>
</feature>
<feature type="topological domain" description="Extracellular" evidence="4">
    <location>
        <begin position="559"/>
        <end position="568"/>
    </location>
</feature>
<feature type="transmembrane region" description="Helical; Name=S4 of repeat II" evidence="4">
    <location>
        <begin position="569"/>
        <end position="587"/>
    </location>
</feature>
<feature type="topological domain" description="Cytoplasmic" evidence="4">
    <location>
        <begin position="588"/>
        <end position="606"/>
    </location>
</feature>
<feature type="transmembrane region" description="Helical; Name=S5 of repeat II" evidence="4">
    <location>
        <begin position="607"/>
        <end position="626"/>
    </location>
</feature>
<feature type="topological domain" description="Extracellular" evidence="4">
    <location>
        <begin position="627"/>
        <end position="679"/>
    </location>
</feature>
<feature type="transmembrane region" description="Helical; Name=S6 of repeat II" evidence="4">
    <location>
        <begin position="680"/>
        <end position="704"/>
    </location>
</feature>
<feature type="topological domain" description="Cytoplasmic" evidence="4">
    <location>
        <begin position="705"/>
        <end position="1150"/>
    </location>
</feature>
<feature type="transmembrane region" description="Helical; Name=S1 of repeat III" evidence="4">
    <location>
        <begin position="1151"/>
        <end position="1167"/>
    </location>
</feature>
<feature type="topological domain" description="Extracellular" evidence="4">
    <location>
        <begin position="1168"/>
        <end position="1191"/>
    </location>
</feature>
<feature type="transmembrane region" description="Helical; Name=S2 of repeat III" evidence="4">
    <location>
        <begin position="1192"/>
        <end position="1211"/>
    </location>
</feature>
<feature type="topological domain" description="Cytoplasmic" evidence="4">
    <location>
        <begin position="1212"/>
        <end position="1219"/>
    </location>
</feature>
<feature type="transmembrane region" description="Helical; Name=S3 of repeat III" evidence="4">
    <location>
        <begin position="1220"/>
        <end position="1242"/>
    </location>
</feature>
<feature type="topological domain" description="Extracellular" evidence="4">
    <location>
        <begin position="1243"/>
        <end position="1256"/>
    </location>
</feature>
<feature type="transmembrane region" description="Helical; Name=S4 of repeat III" evidence="4">
    <location>
        <begin position="1257"/>
        <end position="1274"/>
    </location>
</feature>
<feature type="topological domain" description="Cytoplasmic" evidence="4">
    <location>
        <begin position="1275"/>
        <end position="1293"/>
    </location>
</feature>
<feature type="transmembrane region" description="Helical; Name=S5 of repeat III" evidence="4">
    <location>
        <begin position="1294"/>
        <end position="1313"/>
    </location>
</feature>
<feature type="topological domain" description="Extracellular" evidence="4">
    <location>
        <begin position="1314"/>
        <end position="1400"/>
    </location>
</feature>
<feature type="transmembrane region" description="Helical; Name=S6 of repeat III" evidence="4">
    <location>
        <begin position="1401"/>
        <end position="1424"/>
    </location>
</feature>
<feature type="topological domain" description="Cytoplasmic" evidence="4">
    <location>
        <begin position="1425"/>
        <end position="1481"/>
    </location>
</feature>
<feature type="transmembrane region" description="Helical; Name=S1 of repeat IV" evidence="4">
    <location>
        <begin position="1482"/>
        <end position="1500"/>
    </location>
</feature>
<feature type="topological domain" description="Extracellular" evidence="4">
    <location>
        <begin position="1501"/>
        <end position="1515"/>
    </location>
</feature>
<feature type="transmembrane region" description="Helical; Name=S2 of repeat IV" evidence="4">
    <location>
        <begin position="1516"/>
        <end position="1535"/>
    </location>
</feature>
<feature type="topological domain" description="Cytoplasmic" evidence="4">
    <location>
        <begin position="1536"/>
        <end position="1543"/>
    </location>
</feature>
<feature type="transmembrane region" description="Helical; Name=S3 of repeat IV" evidence="4">
    <location>
        <begin position="1544"/>
        <end position="1562"/>
    </location>
</feature>
<feature type="topological domain" description="Extracellular" evidence="4">
    <location>
        <begin position="1563"/>
        <end position="1573"/>
    </location>
</feature>
<feature type="transmembrane region" description="Helical; Name=S4 of repeat IV" evidence="4">
    <location>
        <begin position="1574"/>
        <end position="1592"/>
    </location>
</feature>
<feature type="topological domain" description="Cytoplasmic" evidence="4">
    <location>
        <begin position="1593"/>
        <end position="1611"/>
    </location>
</feature>
<feature type="transmembrane region" description="Helical; Name=S5 of repeat IV" evidence="4">
    <location>
        <begin position="1612"/>
        <end position="1631"/>
    </location>
</feature>
<feature type="topological domain" description="Extracellular" evidence="4">
    <location>
        <begin position="1632"/>
        <end position="1700"/>
    </location>
</feature>
<feature type="transmembrane region" description="Helical; Name=S6 of repeat IV" evidence="4">
    <location>
        <begin position="1701"/>
        <end position="1726"/>
    </location>
</feature>
<feature type="topological domain" description="Cytoplasmic" evidence="4">
    <location>
        <begin position="1727"/>
        <end position="2272"/>
    </location>
</feature>
<feature type="repeat" description="I">
    <location>
        <begin position="77"/>
        <end position="355"/>
    </location>
</feature>
<feature type="repeat" description="II">
    <location>
        <begin position="463"/>
        <end position="707"/>
    </location>
</feature>
<feature type="repeat" description="III">
    <location>
        <begin position="1143"/>
        <end position="1429"/>
    </location>
</feature>
<feature type="repeat" description="IV">
    <location>
        <begin position="1466"/>
        <end position="1729"/>
    </location>
</feature>
<feature type="domain" description="EF-hand" evidence="5">
    <location>
        <begin position="1742"/>
        <end position="1777"/>
    </location>
</feature>
<feature type="region of interest" description="Disordered" evidence="6">
    <location>
        <begin position="1"/>
        <end position="40"/>
    </location>
</feature>
<feature type="region of interest" description="Binding to the beta subunit" evidence="1">
    <location>
        <begin position="375"/>
        <end position="392"/>
    </location>
</feature>
<feature type="region of interest" description="Disordered" evidence="6">
    <location>
        <begin position="730"/>
        <end position="777"/>
    </location>
</feature>
<feature type="region of interest" description="Disordered" evidence="6">
    <location>
        <begin position="854"/>
        <end position="994"/>
    </location>
</feature>
<feature type="region of interest" description="Disordered" evidence="6">
    <location>
        <begin position="1091"/>
        <end position="1127"/>
    </location>
</feature>
<feature type="region of interest" description="Disordered" evidence="6">
    <location>
        <begin position="2021"/>
        <end position="2186"/>
    </location>
</feature>
<feature type="compositionally biased region" description="Basic residues" evidence="6">
    <location>
        <begin position="914"/>
        <end position="927"/>
    </location>
</feature>
<feature type="compositionally biased region" description="Low complexity" evidence="6">
    <location>
        <begin position="934"/>
        <end position="946"/>
    </location>
</feature>
<feature type="compositionally biased region" description="Basic and acidic residues" evidence="6">
    <location>
        <begin position="956"/>
        <end position="985"/>
    </location>
</feature>
<feature type="compositionally biased region" description="Basic and acidic residues" evidence="6">
    <location>
        <begin position="1094"/>
        <end position="1105"/>
    </location>
</feature>
<feature type="compositionally biased region" description="Basic and acidic residues" evidence="6">
    <location>
        <begin position="2025"/>
        <end position="2045"/>
    </location>
</feature>
<feature type="compositionally biased region" description="Basic and acidic residues" evidence="6">
    <location>
        <begin position="2061"/>
        <end position="2078"/>
    </location>
</feature>
<feature type="compositionally biased region" description="Low complexity" evidence="6">
    <location>
        <begin position="2097"/>
        <end position="2112"/>
    </location>
</feature>
<feature type="compositionally biased region" description="Polar residues" evidence="6">
    <location>
        <begin position="2155"/>
        <end position="2174"/>
    </location>
</feature>
<feature type="compositionally biased region" description="Low complexity" evidence="6">
    <location>
        <begin position="2175"/>
        <end position="2186"/>
    </location>
</feature>
<feature type="binding site" evidence="8">
    <location>
        <position position="427"/>
    </location>
    <ligand>
        <name>Ca(2+)</name>
        <dbReference type="ChEBI" id="CHEBI:29108"/>
        <label>1</label>
    </ligand>
</feature>
<feature type="binding site" evidence="8">
    <location>
        <position position="429"/>
    </location>
    <ligand>
        <name>Ca(2+)</name>
        <dbReference type="ChEBI" id="CHEBI:29108"/>
        <label>1</label>
    </ligand>
</feature>
<feature type="binding site" evidence="8">
    <location>
        <position position="431"/>
    </location>
    <ligand>
        <name>Ca(2+)</name>
        <dbReference type="ChEBI" id="CHEBI:29108"/>
        <label>1</label>
    </ligand>
</feature>
<feature type="binding site" evidence="8">
    <location>
        <position position="433"/>
    </location>
    <ligand>
        <name>Ca(2+)</name>
        <dbReference type="ChEBI" id="CHEBI:29108"/>
        <label>1</label>
    </ligand>
</feature>
<feature type="binding site" evidence="8">
    <location>
        <position position="438"/>
    </location>
    <ligand>
        <name>Ca(2+)</name>
        <dbReference type="ChEBI" id="CHEBI:29108"/>
        <label>1</label>
    </ligand>
</feature>
<feature type="binding site" evidence="8">
    <location>
        <position position="1755"/>
    </location>
    <ligand>
        <name>Ca(2+)</name>
        <dbReference type="ChEBI" id="CHEBI:29108"/>
        <label>2</label>
    </ligand>
</feature>
<feature type="binding site" evidence="8">
    <location>
        <position position="1761"/>
    </location>
    <ligand>
        <name>Ca(2+)</name>
        <dbReference type="ChEBI" id="CHEBI:29108"/>
        <label>2</label>
    </ligand>
</feature>
<feature type="binding site" evidence="8">
    <location>
        <position position="1766"/>
    </location>
    <ligand>
        <name>Ca(2+)</name>
        <dbReference type="ChEBI" id="CHEBI:29108"/>
        <label>2</label>
    </ligand>
</feature>
<feature type="site" description="Calcium ion selectivity and permeability" evidence="1">
    <location>
        <position position="310"/>
    </location>
</feature>
<feature type="site" description="Calcium ion selectivity and permeability" evidence="1">
    <location>
        <position position="658"/>
    </location>
</feature>
<feature type="site" description="Calcium ion selectivity and permeability" evidence="1">
    <location>
        <position position="1375"/>
    </location>
</feature>
<feature type="site" description="Calcium ion selectivity and permeability" evidence="1">
    <location>
        <position position="1666"/>
    </location>
</feature>
<feature type="modified residue" description="Phosphoserine" evidence="9">
    <location>
        <position position="15"/>
    </location>
</feature>
<feature type="modified residue" description="Phosphoserine" evidence="9">
    <location>
        <position position="20"/>
    </location>
</feature>
<feature type="modified residue" description="Phosphoserine" evidence="9">
    <location>
        <position position="428"/>
    </location>
</feature>
<feature type="modified residue" description="Phosphothreonine" evidence="9">
    <location>
        <position position="441"/>
    </location>
</feature>
<feature type="modified residue" description="Phosphoserine" evidence="2">
    <location>
        <position position="737"/>
    </location>
</feature>
<feature type="modified residue" description="Phosphoserine" evidence="9">
    <location>
        <position position="746"/>
    </location>
</feature>
<feature type="modified residue" description="Phosphoserine" evidence="2">
    <location>
        <position position="794"/>
    </location>
</feature>
<feature type="modified residue" description="Phosphoserine" evidence="9">
    <location>
        <position position="816"/>
    </location>
</feature>
<feature type="modified residue" description="Phosphoserine" evidence="9">
    <location>
        <position position="856"/>
    </location>
</feature>
<feature type="modified residue" description="Phosphoserine" evidence="2">
    <location>
        <position position="948"/>
    </location>
</feature>
<feature type="modified residue" description="Phosphoserine" evidence="2">
    <location>
        <position position="1099"/>
    </location>
</feature>
<feature type="modified residue" description="Phosphoserine" evidence="9">
    <location>
        <position position="2054"/>
    </location>
</feature>
<feature type="modified residue" description="Phosphoserine" evidence="2">
    <location>
        <position position="2073"/>
    </location>
</feature>
<feature type="glycosylation site" description="N-linked (GlcNAc...) asparagine" evidence="4">
    <location>
        <position position="255"/>
    </location>
</feature>
<feature type="glycosylation site" description="N-linked (GlcNAc...) asparagine" evidence="4">
    <location>
        <position position="1569"/>
    </location>
</feature>
<feature type="glycosylation site" description="N-linked (GlcNAc...) asparagine" evidence="4">
    <location>
        <position position="1692"/>
    </location>
</feature>
<sequence length="2272" mass="257236">MARFGEAVVVGRPGSGDGDSDQSRNRQGTPVPASGPAAAYKQSKAQRARTMALYNPIPVRQNCFTVNRSLFIFGEDNIVRKYAKKLIDWPPFEYMILATIIANCIVLALEQHLPEDDKTPMSRRLEKTEPYFIGIFCFEAGIKIVALGFIFHKGSYLRNGWNVMDFIVVLSGILATAGTHFNTHVDLRALRAVRVLRPLKLVSGIPSLQIVLKSIMKAMVPLLQIGLLLFFAILMFAIIGLEFYSGKLHRACFMNNSGILEGFDPPHPCGVQGCPAGYECKDWIGPNDGITQFDNILFAVLTVFQCITMEGWTTVLYNTNDALGATWNWLYFIPLIIIGSFFVLNLVLGVLSGEFAKERERVENRRAFMKLRRQQQIERELNGYRAWIDKAEEVMLAEENKNSGTSALEVLRRATIKRSRTEAMTRDSSDEHCVDISSVGTPLARASIKSTKVDGASYFRHKERLLRISIRHMVKSQVFYWIVLSVVALNTACVAIVHHNQPQWLTHLLYYAEFLFLGLFLLEMSLKMYGMGPRLYFHSSFNCFDFGVTVGSIFEVVWAIFRPGTSFGISVLRALRLLRIFKITKYWASLRNLVVSLMSSMKSIISLLFLLFLFIVVFALLGMQLFGGRFNFNDGTPSANFDTFPAAIMTVFQILTGEDWNEVMYNGIRSQGGVSSGMWSAIYFIVLTLFGNYTLLNVFLAIAVDNLANAQELTKDEQEEEEAFNQKHALQKAKEVSPMSAPNMPSIERDRRRRHHMSMWEPRSSHLRERRRRHHMSVWEQRTSQLRRHMQMSSQEALNKEEAPPMNPLNPLNPLSPLNPLNAHPSLYRRPRPIEGLALGLGLEKCEEERISRGGSLKGDIGGLTSALDNQRSPLSLGKREPPWLPRSCHGNCDPIQQEAGGGETVVTFEDRARHRQSQRRSRHRRVRTEGKDSASASRSRSASQERSLDEGVSVEGEKEHEPHSSHRSKEPTIHEEERTQDLRRTNSLMVPRGSGLVGALDEAETPLVQPQPELEVGKDAALTEQEAEGSSEQALLGDVQLDVGRGISQSEPDLSCMTANMDKATTESTSVTVAIPDVDPLVDSTVVNISNKTDGEASPLKEAETKEEEEEVEKKKKQKKEKRETGKAMVPHSSMFIFSTTNPIRRACHYIVNLRYFEMCILLVIAASSIALAAEDPVLTNSERNKVLRYFDYVFTGVFTFEMVIKMIDQGLILQDGSYFRDLWNILDFVVVVGALVAFALANALGTNKGRDIKTIKSLRVLRVLRPLKTIKRLPKLKAVFDCVVTSLKNVFNILIVYKLFMFIFAVIAVQLFKGKFFYCTDSSKDTEKECIGNYVDHEKNKMEVKGREWKRHEFHYDNIIWALLTLFTVSTGEGWPQVLQHSVDVTEEDRGPSRSNRMEMSIFYVVYFVVFPFFFVNIFVALIIITFQEQGDKMMEECSLEKNERACIDFAISAKPLTRYMPQNRHTFQYRVWHFVVSPSFEYTIMAMIALNTVVLMMKYYTAPCTYELALKYLNIAFTMVFSLECVLKVIAFGFLNYFRDTWNIFDFITVIGSITEIILTDSKLVNTSGFNMSFLKLFRAARLIKLLRQGYTIRILLWTFVQSFKALPYVCLLIAMLFFIYAIIGMQVFGNIKLDEESHINRHNNFRSFFGSLMLLFRSATGEAWQEIMLSCLGEKGCEPDTTAPSGQNESERCGTDLAYVYFVSFIFFCSFLMLNLFVAVIMDNFEYLTRDSSILGPHHLDEFVRVWAEYDRAACGRIHYTEMYEMLTLMSPPLGLGKRCPSKVAYKRLVLMNMPVAEDMTVHFTSTLMALIRTALDIKIAKGGADRQQLDSELQKETLAIWPHLSQKMLDLLVPMPKASDLTVGKIYAAMMIMDYYKQSKVKKQRQQLEEQKNAPMFQRMEPSSLPQEIIANAKALPYLQQDPVSGLSGRSGYPSMSPLSPQEIFQLACMDPADDGQFQEQQSLVVTDPSSMRRSFSTIRDKRSNSSWLEEFSMERSSENTYKSRRRSYHSSLRLSAHRLNSDSGHKSDTHRSGGRERGRSKERKHLLSPDVSRCNSEERGTQADWESPERRQSRSPSEGRSQTPNRQGTGSLSESSIPSISDTSTPRRSRRQLPPVPPKPRPLLSYSSLMRHTGGISPPPDGSEGGSPLASQALESNSACLTESSNSLHPQQGQHPSPQHYISEPYLALHEDSHASDCGEEETLTFEAAVATSLGRSNTIGSAPPLRHSWQMPNGHYRRRRWGAWAGMMCGAVSDLLSDTEEDDKC</sequence>
<gene>
    <name type="primary">Cacna1e</name>
    <name type="synonym">Cach6</name>
    <name type="synonym">Cacnl1a6</name>
    <name type="synonym">Cchra1</name>
</gene>
<evidence type="ECO:0000250" key="1"/>
<evidence type="ECO:0000250" key="2">
    <source>
        <dbReference type="UniProtKB" id="Q07652"/>
    </source>
</evidence>
<evidence type="ECO:0000250" key="3">
    <source>
        <dbReference type="UniProtKB" id="Q15878"/>
    </source>
</evidence>
<evidence type="ECO:0000255" key="4"/>
<evidence type="ECO:0000255" key="5">
    <source>
        <dbReference type="PROSITE-ProRule" id="PRU00448"/>
    </source>
</evidence>
<evidence type="ECO:0000256" key="6">
    <source>
        <dbReference type="SAM" id="MobiDB-lite"/>
    </source>
</evidence>
<evidence type="ECO:0000269" key="7">
    <source>
    </source>
</evidence>
<evidence type="ECO:0000305" key="8"/>
<evidence type="ECO:0007744" key="9">
    <source>
    </source>
</evidence>
<accession>Q61290</accession>
<name>CAC1E_MOUSE</name>
<reference key="1">
    <citation type="journal article" date="1994" name="J. Biol. Chem.">
        <title>Structure and functional characterization of neuronal alpha 1E calcium channel subtypes.</title>
        <authorList>
            <person name="Williams M.E."/>
            <person name="Marubio L.M."/>
            <person name="Deal C.R."/>
            <person name="Hans M."/>
            <person name="Brust P.F."/>
            <person name="Philipson L.H."/>
            <person name="Miller R.J."/>
            <person name="Johnson E.C."/>
            <person name="Harpold M.M."/>
            <person name="Ellis S.B."/>
        </authorList>
    </citation>
    <scope>NUCLEOTIDE SEQUENCE [MRNA]</scope>
    <scope>FUNCTION</scope>
    <scope>TRANSPORTER ACTIVITY</scope>
    <source>
        <strain>BALB/cJ</strain>
        <tissue>Brain</tissue>
    </source>
</reference>
<reference key="2">
    <citation type="journal article" date="2007" name="Mol. Cell. Proteomics">
        <title>Qualitative and quantitative analyses of protein phosphorylation in naive and stimulated mouse synaptosomal preparations.</title>
        <authorList>
            <person name="Munton R.P."/>
            <person name="Tweedie-Cullen R."/>
            <person name="Livingstone-Zatchej M."/>
            <person name="Weinandy F."/>
            <person name="Waidelich M."/>
            <person name="Longo D."/>
            <person name="Gehrig P."/>
            <person name="Potthast F."/>
            <person name="Rutishauser D."/>
            <person name="Gerrits B."/>
            <person name="Panse C."/>
            <person name="Schlapbach R."/>
            <person name="Mansuy I.M."/>
        </authorList>
    </citation>
    <scope>IDENTIFICATION BY MASS SPECTROMETRY [LARGE SCALE ANALYSIS]</scope>
    <source>
        <tissue>Brain cortex</tissue>
    </source>
</reference>
<reference key="3">
    <citation type="journal article" date="2010" name="Cell">
        <title>A tissue-specific atlas of mouse protein phosphorylation and expression.</title>
        <authorList>
            <person name="Huttlin E.L."/>
            <person name="Jedrychowski M.P."/>
            <person name="Elias J.E."/>
            <person name="Goswami T."/>
            <person name="Rad R."/>
            <person name="Beausoleil S.A."/>
            <person name="Villen J."/>
            <person name="Haas W."/>
            <person name="Sowa M.E."/>
            <person name="Gygi S.P."/>
        </authorList>
    </citation>
    <scope>PHOSPHORYLATION [LARGE SCALE ANALYSIS] AT SER-15; SER-20; SER-428; THR-441; SER-746; SER-816; SER-856 AND SER-2054</scope>
    <scope>IDENTIFICATION BY MASS SPECTROMETRY [LARGE SCALE ANALYSIS]</scope>
    <source>
        <tissue>Brain</tissue>
    </source>
</reference>